<sequence length="436" mass="47161">MTNNTMLISLSTQPADARWGEKATLSVNEQGFTIHVGTTSLNGKAALATIQRAARKIDGQGIKHVTLAGEGWDLANSWAFWQGYRGPKGQRTVEWAELNDADKKELNDRLKIVDWVRDTINLPAEDLGPEQLATRAVDLLCDVACDAVNYRITKGEDLREQNYAGLYTVGRGSERQPVLLALDYNPTGNPDAPVFACLVGKGITFDTGGYSLKPSGSMDSMKSDMGGAATLTGALALAASRGLQQRVKLYLCCADNMVSGNAFRLGDIIRYRNGKTVEVMNTDAEGRLVLADGLIDASEQNPQWIIDCATLTGAAKMALGNDYHALFSFDDELVAALQESAKEENEPFWRLPLEEFHRSHLPSSFADLNNIASGAHTAGASTAAAFLSHFVKNYQQGWLHIDCSATYRKGAVDQWATGATGLGVRTLANLLLSNAK</sequence>
<feature type="chain" id="PRO_0000165832" description="Peptidase B">
    <location>
        <begin position="1"/>
        <end position="436"/>
    </location>
</feature>
<feature type="active site" evidence="1">
    <location>
        <position position="213"/>
    </location>
</feature>
<feature type="active site" evidence="1">
    <location>
        <position position="287"/>
    </location>
</feature>
<feature type="binding site" evidence="1">
    <location>
        <position position="201"/>
    </location>
    <ligand>
        <name>Mn(2+)</name>
        <dbReference type="ChEBI" id="CHEBI:29035"/>
        <label>2</label>
    </ligand>
</feature>
<feature type="binding site" evidence="1">
    <location>
        <position position="206"/>
    </location>
    <ligand>
        <name>Mn(2+)</name>
        <dbReference type="ChEBI" id="CHEBI:29035"/>
        <label>1</label>
    </ligand>
</feature>
<feature type="binding site" evidence="1">
    <location>
        <position position="206"/>
    </location>
    <ligand>
        <name>Mn(2+)</name>
        <dbReference type="ChEBI" id="CHEBI:29035"/>
        <label>2</label>
    </ligand>
</feature>
<feature type="binding site" evidence="1">
    <location>
        <position position="224"/>
    </location>
    <ligand>
        <name>Mn(2+)</name>
        <dbReference type="ChEBI" id="CHEBI:29035"/>
        <label>2</label>
    </ligand>
</feature>
<feature type="binding site" evidence="1">
    <location>
        <position position="283"/>
    </location>
    <ligand>
        <name>Mn(2+)</name>
        <dbReference type="ChEBI" id="CHEBI:29035"/>
        <label>1</label>
    </ligand>
</feature>
<feature type="binding site" evidence="1">
    <location>
        <position position="285"/>
    </location>
    <ligand>
        <name>Mn(2+)</name>
        <dbReference type="ChEBI" id="CHEBI:29035"/>
        <label>1</label>
    </ligand>
</feature>
<feature type="binding site" evidence="1">
    <location>
        <position position="285"/>
    </location>
    <ligand>
        <name>Mn(2+)</name>
        <dbReference type="ChEBI" id="CHEBI:29035"/>
        <label>2</label>
    </ligand>
</feature>
<keyword id="KW-0031">Aminopeptidase</keyword>
<keyword id="KW-0963">Cytoplasm</keyword>
<keyword id="KW-0378">Hydrolase</keyword>
<keyword id="KW-0464">Manganese</keyword>
<keyword id="KW-0479">Metal-binding</keyword>
<keyword id="KW-0645">Protease</keyword>
<keyword id="KW-1185">Reference proteome</keyword>
<proteinExistence type="inferred from homology"/>
<gene>
    <name evidence="1" type="primary">pepB</name>
    <name type="ordered locus">ECA3230</name>
</gene>
<comment type="function">
    <text evidence="1">Probably plays an important role in intracellular peptide degradation.</text>
</comment>
<comment type="catalytic activity">
    <reaction evidence="1">
        <text>Release of an N-terminal amino acid, Xaa, from a peptide or arylamide. Xaa is preferably Glu or Asp but may be other amino acids, including Leu, Met, His, Cys and Gln.</text>
        <dbReference type="EC" id="3.4.11.23"/>
    </reaction>
</comment>
<comment type="cofactor">
    <cofactor evidence="1">
        <name>Mn(2+)</name>
        <dbReference type="ChEBI" id="CHEBI:29035"/>
    </cofactor>
    <text evidence="1">Binds 2 manganese ions per subunit.</text>
</comment>
<comment type="subunit">
    <text evidence="1">Homohexamer.</text>
</comment>
<comment type="subcellular location">
    <subcellularLocation>
        <location evidence="1">Cytoplasm</location>
    </subcellularLocation>
</comment>
<comment type="similarity">
    <text evidence="1">Belongs to the peptidase M17 family.</text>
</comment>
<accession>Q6D266</accession>
<name>PEPB_PECAS</name>
<dbReference type="EC" id="3.4.11.23" evidence="1"/>
<dbReference type="EMBL" id="BX950851">
    <property type="protein sequence ID" value="CAG76128.1"/>
    <property type="molecule type" value="Genomic_DNA"/>
</dbReference>
<dbReference type="RefSeq" id="WP_011094751.1">
    <property type="nucleotide sequence ID" value="NC_004547.2"/>
</dbReference>
<dbReference type="SMR" id="Q6D266"/>
<dbReference type="STRING" id="218491.ECA3230"/>
<dbReference type="MEROPS" id="M17.004"/>
<dbReference type="GeneID" id="57209914"/>
<dbReference type="KEGG" id="eca:ECA3230"/>
<dbReference type="PATRIC" id="fig|218491.5.peg.3272"/>
<dbReference type="eggNOG" id="COG0260">
    <property type="taxonomic scope" value="Bacteria"/>
</dbReference>
<dbReference type="HOGENOM" id="CLU_013734_7_1_6"/>
<dbReference type="OrthoDB" id="9809354at2"/>
<dbReference type="Proteomes" id="UP000007966">
    <property type="component" value="Chromosome"/>
</dbReference>
<dbReference type="GO" id="GO:0005737">
    <property type="term" value="C:cytoplasm"/>
    <property type="evidence" value="ECO:0007669"/>
    <property type="project" value="UniProtKB-SubCell"/>
</dbReference>
<dbReference type="GO" id="GO:0030145">
    <property type="term" value="F:manganese ion binding"/>
    <property type="evidence" value="ECO:0007669"/>
    <property type="project" value="UniProtKB-UniRule"/>
</dbReference>
<dbReference type="GO" id="GO:0070006">
    <property type="term" value="F:metalloaminopeptidase activity"/>
    <property type="evidence" value="ECO:0007669"/>
    <property type="project" value="InterPro"/>
</dbReference>
<dbReference type="GO" id="GO:0006508">
    <property type="term" value="P:proteolysis"/>
    <property type="evidence" value="ECO:0007669"/>
    <property type="project" value="UniProtKB-UniRule"/>
</dbReference>
<dbReference type="CDD" id="cd00433">
    <property type="entry name" value="Peptidase_M17"/>
    <property type="match status" value="1"/>
</dbReference>
<dbReference type="FunFam" id="3.40.630.10:FF:000037">
    <property type="entry name" value="Peptidase B"/>
    <property type="match status" value="1"/>
</dbReference>
<dbReference type="Gene3D" id="3.40.630.10">
    <property type="entry name" value="Zn peptidases"/>
    <property type="match status" value="1"/>
</dbReference>
<dbReference type="HAMAP" id="MF_00504">
    <property type="entry name" value="Aminopeptidase_M17"/>
    <property type="match status" value="1"/>
</dbReference>
<dbReference type="InterPro" id="IPR011356">
    <property type="entry name" value="Leucine_aapep/pepB"/>
</dbReference>
<dbReference type="InterPro" id="IPR047620">
    <property type="entry name" value="M17_PepB-like_N"/>
</dbReference>
<dbReference type="InterPro" id="IPR008330">
    <property type="entry name" value="Pept_M17_PepB"/>
</dbReference>
<dbReference type="InterPro" id="IPR000819">
    <property type="entry name" value="Peptidase_M17_C"/>
</dbReference>
<dbReference type="NCBIfam" id="NF003450">
    <property type="entry name" value="PRK05015.1"/>
    <property type="match status" value="1"/>
</dbReference>
<dbReference type="PANTHER" id="PTHR11963">
    <property type="entry name" value="LEUCINE AMINOPEPTIDASE-RELATED"/>
    <property type="match status" value="1"/>
</dbReference>
<dbReference type="PANTHER" id="PTHR11963:SF20">
    <property type="entry name" value="PEPTIDASE B"/>
    <property type="match status" value="1"/>
</dbReference>
<dbReference type="Pfam" id="PF12404">
    <property type="entry name" value="DUF3663"/>
    <property type="match status" value="1"/>
</dbReference>
<dbReference type="Pfam" id="PF00883">
    <property type="entry name" value="Peptidase_M17"/>
    <property type="match status" value="1"/>
</dbReference>
<dbReference type="PIRSF" id="PIRSF036388">
    <property type="entry name" value="Ctsl_amnpptdse_B"/>
    <property type="match status" value="1"/>
</dbReference>
<dbReference type="PRINTS" id="PR00481">
    <property type="entry name" value="LAMNOPPTDASE"/>
</dbReference>
<dbReference type="SUPFAM" id="SSF53187">
    <property type="entry name" value="Zn-dependent exopeptidases"/>
    <property type="match status" value="1"/>
</dbReference>
<dbReference type="PROSITE" id="PS00631">
    <property type="entry name" value="CYTOSOL_AP"/>
    <property type="match status" value="1"/>
</dbReference>
<reference key="1">
    <citation type="journal article" date="2004" name="Proc. Natl. Acad. Sci. U.S.A.">
        <title>Genome sequence of the enterobacterial phytopathogen Erwinia carotovora subsp. atroseptica and characterization of virulence factors.</title>
        <authorList>
            <person name="Bell K.S."/>
            <person name="Sebaihia M."/>
            <person name="Pritchard L."/>
            <person name="Holden M.T.G."/>
            <person name="Hyman L.J."/>
            <person name="Holeva M.C."/>
            <person name="Thomson N.R."/>
            <person name="Bentley S.D."/>
            <person name="Churcher L.J.C."/>
            <person name="Mungall K."/>
            <person name="Atkin R."/>
            <person name="Bason N."/>
            <person name="Brooks K."/>
            <person name="Chillingworth T."/>
            <person name="Clark K."/>
            <person name="Doggett J."/>
            <person name="Fraser A."/>
            <person name="Hance Z."/>
            <person name="Hauser H."/>
            <person name="Jagels K."/>
            <person name="Moule S."/>
            <person name="Norbertczak H."/>
            <person name="Ormond D."/>
            <person name="Price C."/>
            <person name="Quail M.A."/>
            <person name="Sanders M."/>
            <person name="Walker D."/>
            <person name="Whitehead S."/>
            <person name="Salmond G.P.C."/>
            <person name="Birch P.R.J."/>
            <person name="Parkhill J."/>
            <person name="Toth I.K."/>
        </authorList>
    </citation>
    <scope>NUCLEOTIDE SEQUENCE [LARGE SCALE GENOMIC DNA]</scope>
    <source>
        <strain>SCRI 1043 / ATCC BAA-672</strain>
    </source>
</reference>
<evidence type="ECO:0000255" key="1">
    <source>
        <dbReference type="HAMAP-Rule" id="MF_00504"/>
    </source>
</evidence>
<protein>
    <recommendedName>
        <fullName evidence="1">Peptidase B</fullName>
        <ecNumber evidence="1">3.4.11.23</ecNumber>
    </recommendedName>
    <alternativeName>
        <fullName evidence="1">Aminopeptidase B</fullName>
    </alternativeName>
</protein>
<organism>
    <name type="scientific">Pectobacterium atrosepticum (strain SCRI 1043 / ATCC BAA-672)</name>
    <name type="common">Erwinia carotovora subsp. atroseptica</name>
    <dbReference type="NCBI Taxonomy" id="218491"/>
    <lineage>
        <taxon>Bacteria</taxon>
        <taxon>Pseudomonadati</taxon>
        <taxon>Pseudomonadota</taxon>
        <taxon>Gammaproteobacteria</taxon>
        <taxon>Enterobacterales</taxon>
        <taxon>Pectobacteriaceae</taxon>
        <taxon>Pectobacterium</taxon>
    </lineage>
</organism>